<accession>Q6GBQ8</accession>
<sequence length="55" mass="6500">MIIYRQYHHEGAPVYEIITKTFQHVSIKCDDSFSDTEIFKLLSLLQDDIDHMKVS</sequence>
<gene>
    <name type="primary">vraX</name>
    <name type="ordered locus">SAS0537</name>
</gene>
<protein>
    <recommendedName>
        <fullName>Protein VraX</fullName>
    </recommendedName>
</protein>
<organism>
    <name type="scientific">Staphylococcus aureus (strain MSSA476)</name>
    <dbReference type="NCBI Taxonomy" id="282459"/>
    <lineage>
        <taxon>Bacteria</taxon>
        <taxon>Bacillati</taxon>
        <taxon>Bacillota</taxon>
        <taxon>Bacilli</taxon>
        <taxon>Bacillales</taxon>
        <taxon>Staphylococcaceae</taxon>
        <taxon>Staphylococcus</taxon>
    </lineage>
</organism>
<feature type="chain" id="PRO_0000065924" description="Protein VraX">
    <location>
        <begin position="1"/>
        <end position="55"/>
    </location>
</feature>
<dbReference type="EMBL" id="BX571857">
    <property type="protein sequence ID" value="CAG42312.1"/>
    <property type="molecule type" value="Genomic_DNA"/>
</dbReference>
<dbReference type="RefSeq" id="WP_000587958.1">
    <property type="nucleotide sequence ID" value="NC_002953.3"/>
</dbReference>
<dbReference type="GeneID" id="98344911"/>
<dbReference type="KEGG" id="sas:SAS0537"/>
<dbReference type="HOGENOM" id="CLU_212227_0_0_9"/>
<dbReference type="InterPro" id="IPR035374">
    <property type="entry name" value="VraX"/>
</dbReference>
<dbReference type="Pfam" id="PF17412">
    <property type="entry name" value="VraX"/>
    <property type="match status" value="1"/>
</dbReference>
<proteinExistence type="predicted"/>
<reference key="1">
    <citation type="journal article" date="2004" name="Proc. Natl. Acad. Sci. U.S.A.">
        <title>Complete genomes of two clinical Staphylococcus aureus strains: evidence for the rapid evolution of virulence and drug resistance.</title>
        <authorList>
            <person name="Holden M.T.G."/>
            <person name="Feil E.J."/>
            <person name="Lindsay J.A."/>
            <person name="Peacock S.J."/>
            <person name="Day N.P.J."/>
            <person name="Enright M.C."/>
            <person name="Foster T.J."/>
            <person name="Moore C.E."/>
            <person name="Hurst L."/>
            <person name="Atkin R."/>
            <person name="Barron A."/>
            <person name="Bason N."/>
            <person name="Bentley S.D."/>
            <person name="Chillingworth C."/>
            <person name="Chillingworth T."/>
            <person name="Churcher C."/>
            <person name="Clark L."/>
            <person name="Corton C."/>
            <person name="Cronin A."/>
            <person name="Doggett J."/>
            <person name="Dowd L."/>
            <person name="Feltwell T."/>
            <person name="Hance Z."/>
            <person name="Harris B."/>
            <person name="Hauser H."/>
            <person name="Holroyd S."/>
            <person name="Jagels K."/>
            <person name="James K.D."/>
            <person name="Lennard N."/>
            <person name="Line A."/>
            <person name="Mayes R."/>
            <person name="Moule S."/>
            <person name="Mungall K."/>
            <person name="Ormond D."/>
            <person name="Quail M.A."/>
            <person name="Rabbinowitsch E."/>
            <person name="Rutherford K.M."/>
            <person name="Sanders M."/>
            <person name="Sharp S."/>
            <person name="Simmonds M."/>
            <person name="Stevens K."/>
            <person name="Whitehead S."/>
            <person name="Barrell B.G."/>
            <person name="Spratt B.G."/>
            <person name="Parkhill J."/>
        </authorList>
    </citation>
    <scope>NUCLEOTIDE SEQUENCE [LARGE SCALE GENOMIC DNA]</scope>
    <source>
        <strain>MSSA476</strain>
    </source>
</reference>
<name>VRAX_STAAS</name>